<evidence type="ECO:0000250" key="1">
    <source>
        <dbReference type="UniProtKB" id="Q06053"/>
    </source>
</evidence>
<evidence type="ECO:0000250" key="2">
    <source>
        <dbReference type="UniProtKB" id="Q5SMC7"/>
    </source>
</evidence>
<evidence type="ECO:0000250" key="3">
    <source>
        <dbReference type="UniProtKB" id="Q9UTH9"/>
    </source>
</evidence>
<evidence type="ECO:0000256" key="4">
    <source>
        <dbReference type="SAM" id="MobiDB-lite"/>
    </source>
</evidence>
<evidence type="ECO:0000305" key="5"/>
<reference key="1">
    <citation type="journal article" date="2009" name="Nature">
        <title>Evolution of pathogenicity and sexual reproduction in eight Candida genomes.</title>
        <authorList>
            <person name="Butler G."/>
            <person name="Rasmussen M.D."/>
            <person name="Lin M.F."/>
            <person name="Santos M.A.S."/>
            <person name="Sakthikumar S."/>
            <person name="Munro C.A."/>
            <person name="Rheinbay E."/>
            <person name="Grabherr M."/>
            <person name="Forche A."/>
            <person name="Reedy J.L."/>
            <person name="Agrafioti I."/>
            <person name="Arnaud M.B."/>
            <person name="Bates S."/>
            <person name="Brown A.J.P."/>
            <person name="Brunke S."/>
            <person name="Costanzo M.C."/>
            <person name="Fitzpatrick D.A."/>
            <person name="de Groot P.W.J."/>
            <person name="Harris D."/>
            <person name="Hoyer L.L."/>
            <person name="Hube B."/>
            <person name="Klis F.M."/>
            <person name="Kodira C."/>
            <person name="Lennard N."/>
            <person name="Logue M.E."/>
            <person name="Martin R."/>
            <person name="Neiman A.M."/>
            <person name="Nikolaou E."/>
            <person name="Quail M.A."/>
            <person name="Quinn J."/>
            <person name="Santos M.C."/>
            <person name="Schmitzberger F.F."/>
            <person name="Sherlock G."/>
            <person name="Shah P."/>
            <person name="Silverstein K.A.T."/>
            <person name="Skrzypek M.S."/>
            <person name="Soll D."/>
            <person name="Staggs R."/>
            <person name="Stansfield I."/>
            <person name="Stumpf M.P.H."/>
            <person name="Sudbery P.E."/>
            <person name="Srikantha T."/>
            <person name="Zeng Q."/>
            <person name="Berman J."/>
            <person name="Berriman M."/>
            <person name="Heitman J."/>
            <person name="Gow N.A.R."/>
            <person name="Lorenz M.C."/>
            <person name="Birren B.W."/>
            <person name="Kellis M."/>
            <person name="Cuomo C.A."/>
        </authorList>
    </citation>
    <scope>NUCLEOTIDE SEQUENCE [LARGE SCALE GENOMIC DNA]</scope>
    <source>
        <strain>ATCC 11503 / BCRC 21390 / CBS 2605 / JCM 1781 / NBRC 1676 / NRRL YB-4239</strain>
    </source>
</reference>
<dbReference type="EC" id="1.3.1.89" evidence="1"/>
<dbReference type="EC" id="1.3.1.-" evidence="3"/>
<dbReference type="EMBL" id="CH981524">
    <property type="protein sequence ID" value="EDK42579.1"/>
    <property type="molecule type" value="Genomic_DNA"/>
</dbReference>
<dbReference type="RefSeq" id="XP_001528237.1">
    <property type="nucleotide sequence ID" value="XM_001528187.1"/>
</dbReference>
<dbReference type="SMR" id="A5DTS1"/>
<dbReference type="FunCoup" id="A5DTS1">
    <property type="interactions" value="871"/>
</dbReference>
<dbReference type="STRING" id="379508.A5DTS1"/>
<dbReference type="GeneID" id="5235766"/>
<dbReference type="KEGG" id="lel:PVL30_000727"/>
<dbReference type="VEuPathDB" id="FungiDB:LELG_00757"/>
<dbReference type="eggNOG" id="KOG2333">
    <property type="taxonomic scope" value="Eukaryota"/>
</dbReference>
<dbReference type="HOGENOM" id="CLU_013299_7_3_1"/>
<dbReference type="InParanoid" id="A5DTS1"/>
<dbReference type="OMA" id="WSYIAEC"/>
<dbReference type="OrthoDB" id="259935at2759"/>
<dbReference type="Proteomes" id="UP000001996">
    <property type="component" value="Unassembled WGS sequence"/>
</dbReference>
<dbReference type="GO" id="GO:0005737">
    <property type="term" value="C:cytoplasm"/>
    <property type="evidence" value="ECO:0007669"/>
    <property type="project" value="UniProtKB-SubCell"/>
</dbReference>
<dbReference type="GO" id="GO:0034399">
    <property type="term" value="C:nuclear periphery"/>
    <property type="evidence" value="ECO:0007669"/>
    <property type="project" value="EnsemblFungi"/>
</dbReference>
<dbReference type="GO" id="GO:0050660">
    <property type="term" value="F:flavin adenine dinucleotide binding"/>
    <property type="evidence" value="ECO:0007669"/>
    <property type="project" value="InterPro"/>
</dbReference>
<dbReference type="GO" id="GO:0106414">
    <property type="term" value="F:mRNA dihydrouridine synthase activity"/>
    <property type="evidence" value="ECO:0007669"/>
    <property type="project" value="RHEA"/>
</dbReference>
<dbReference type="GO" id="GO:0003723">
    <property type="term" value="F:RNA binding"/>
    <property type="evidence" value="ECO:0007669"/>
    <property type="project" value="TreeGrafter"/>
</dbReference>
<dbReference type="GO" id="GO:0102265">
    <property type="term" value="F:tRNA-dihydrouridine47 synthase activity"/>
    <property type="evidence" value="ECO:0007669"/>
    <property type="project" value="UniProtKB-EC"/>
</dbReference>
<dbReference type="GO" id="GO:0008270">
    <property type="term" value="F:zinc ion binding"/>
    <property type="evidence" value="ECO:0007669"/>
    <property type="project" value="UniProtKB-KW"/>
</dbReference>
<dbReference type="GO" id="GO:0006397">
    <property type="term" value="P:mRNA processing"/>
    <property type="evidence" value="ECO:0007669"/>
    <property type="project" value="UniProtKB-KW"/>
</dbReference>
<dbReference type="CDD" id="cd02801">
    <property type="entry name" value="DUS_like_FMN"/>
    <property type="match status" value="1"/>
</dbReference>
<dbReference type="FunFam" id="3.20.20.70:FF:000145">
    <property type="entry name" value="tRNA-dihydrouridine(47) synthase [NAD(P)(+)]"/>
    <property type="match status" value="1"/>
</dbReference>
<dbReference type="Gene3D" id="3.20.20.70">
    <property type="entry name" value="Aldolase class I"/>
    <property type="match status" value="1"/>
</dbReference>
<dbReference type="InterPro" id="IPR013785">
    <property type="entry name" value="Aldolase_TIM"/>
</dbReference>
<dbReference type="InterPro" id="IPR035587">
    <property type="entry name" value="DUS-like_FMN-bd"/>
</dbReference>
<dbReference type="InterPro" id="IPR018517">
    <property type="entry name" value="tRNA_hU_synthase_CS"/>
</dbReference>
<dbReference type="PANTHER" id="PTHR45846">
    <property type="entry name" value="TRNA-DIHYDROURIDINE(47) SYNTHASE [NAD(P)(+)]-LIKE"/>
    <property type="match status" value="1"/>
</dbReference>
<dbReference type="PANTHER" id="PTHR45846:SF1">
    <property type="entry name" value="TRNA-DIHYDROURIDINE(47) SYNTHASE [NAD(P)(+)]-LIKE"/>
    <property type="match status" value="1"/>
</dbReference>
<dbReference type="Pfam" id="PF01207">
    <property type="entry name" value="Dus"/>
    <property type="match status" value="2"/>
</dbReference>
<dbReference type="SUPFAM" id="SSF51395">
    <property type="entry name" value="FMN-linked oxidoreductases"/>
    <property type="match status" value="1"/>
</dbReference>
<dbReference type="PROSITE" id="PS01136">
    <property type="entry name" value="UPF0034"/>
    <property type="match status" value="1"/>
</dbReference>
<keyword id="KW-0963">Cytoplasm</keyword>
<keyword id="KW-0285">Flavoprotein</keyword>
<keyword id="KW-0288">FMN</keyword>
<keyword id="KW-0479">Metal-binding</keyword>
<keyword id="KW-0507">mRNA processing</keyword>
<keyword id="KW-0520">NAD</keyword>
<keyword id="KW-0521">NADP</keyword>
<keyword id="KW-0539">Nucleus</keyword>
<keyword id="KW-0560">Oxidoreductase</keyword>
<keyword id="KW-1185">Reference proteome</keyword>
<keyword id="KW-0677">Repeat</keyword>
<keyword id="KW-0819">tRNA processing</keyword>
<keyword id="KW-0862">Zinc</keyword>
<keyword id="KW-0863">Zinc-finger</keyword>
<proteinExistence type="inferred from homology"/>
<accession>A5DTS1</accession>
<comment type="function">
    <text evidence="1 3">Catalyzes the synthesis of dihydrouridine, a modified base found in the D-loop of most tRNAs. Specifically modifies U47 in cytoplasmic tRNAs (By similarity). Catalyzes the synthesis of dihydrouridine in some mRNAs, thereby affecting their translation (By similarity).</text>
</comment>
<comment type="catalytic activity">
    <reaction evidence="1">
        <text>5,6-dihydrouridine(47) in tRNA + NAD(+) = uridine(47) in tRNA + NADH + H(+)</text>
        <dbReference type="Rhea" id="RHEA:53364"/>
        <dbReference type="Rhea" id="RHEA-COMP:13539"/>
        <dbReference type="Rhea" id="RHEA-COMP:13540"/>
        <dbReference type="ChEBI" id="CHEBI:15378"/>
        <dbReference type="ChEBI" id="CHEBI:57540"/>
        <dbReference type="ChEBI" id="CHEBI:57945"/>
        <dbReference type="ChEBI" id="CHEBI:65315"/>
        <dbReference type="ChEBI" id="CHEBI:74443"/>
        <dbReference type="EC" id="1.3.1.89"/>
    </reaction>
    <physiologicalReaction direction="right-to-left" evidence="1">
        <dbReference type="Rhea" id="RHEA:53366"/>
    </physiologicalReaction>
</comment>
<comment type="catalytic activity">
    <reaction evidence="1">
        <text>5,6-dihydrouridine(47) in tRNA + NADP(+) = uridine(47) in tRNA + NADPH + H(+)</text>
        <dbReference type="Rhea" id="RHEA:53360"/>
        <dbReference type="Rhea" id="RHEA-COMP:13539"/>
        <dbReference type="Rhea" id="RHEA-COMP:13540"/>
        <dbReference type="ChEBI" id="CHEBI:15378"/>
        <dbReference type="ChEBI" id="CHEBI:57783"/>
        <dbReference type="ChEBI" id="CHEBI:58349"/>
        <dbReference type="ChEBI" id="CHEBI:65315"/>
        <dbReference type="ChEBI" id="CHEBI:74443"/>
        <dbReference type="EC" id="1.3.1.89"/>
    </reaction>
    <physiologicalReaction direction="right-to-left" evidence="1">
        <dbReference type="Rhea" id="RHEA:53362"/>
    </physiologicalReaction>
</comment>
<comment type="catalytic activity">
    <reaction evidence="3">
        <text>a 5,6-dihydrouridine in mRNA + NAD(+) = a uridine in mRNA + NADH + H(+)</text>
        <dbReference type="Rhea" id="RHEA:69851"/>
        <dbReference type="Rhea" id="RHEA-COMP:14658"/>
        <dbReference type="Rhea" id="RHEA-COMP:17789"/>
        <dbReference type="ChEBI" id="CHEBI:15378"/>
        <dbReference type="ChEBI" id="CHEBI:57540"/>
        <dbReference type="ChEBI" id="CHEBI:57945"/>
        <dbReference type="ChEBI" id="CHEBI:65315"/>
        <dbReference type="ChEBI" id="CHEBI:74443"/>
    </reaction>
    <physiologicalReaction direction="right-to-left" evidence="3">
        <dbReference type="Rhea" id="RHEA:69853"/>
    </physiologicalReaction>
</comment>
<comment type="catalytic activity">
    <reaction evidence="3">
        <text>a 5,6-dihydrouridine in mRNA + NADP(+) = a uridine in mRNA + NADPH + H(+)</text>
        <dbReference type="Rhea" id="RHEA:69855"/>
        <dbReference type="Rhea" id="RHEA-COMP:14658"/>
        <dbReference type="Rhea" id="RHEA-COMP:17789"/>
        <dbReference type="ChEBI" id="CHEBI:15378"/>
        <dbReference type="ChEBI" id="CHEBI:57783"/>
        <dbReference type="ChEBI" id="CHEBI:58349"/>
        <dbReference type="ChEBI" id="CHEBI:65315"/>
        <dbReference type="ChEBI" id="CHEBI:74443"/>
    </reaction>
    <physiologicalReaction direction="right-to-left" evidence="3">
        <dbReference type="Rhea" id="RHEA:69857"/>
    </physiologicalReaction>
</comment>
<comment type="cofactor">
    <cofactor evidence="2">
        <name>FMN</name>
        <dbReference type="ChEBI" id="CHEBI:58210"/>
    </cofactor>
</comment>
<comment type="subcellular location">
    <subcellularLocation>
        <location evidence="1">Cytoplasm</location>
    </subcellularLocation>
    <subcellularLocation>
        <location evidence="1">Nucleus</location>
    </subcellularLocation>
</comment>
<comment type="similarity">
    <text evidence="5">Belongs to the Dus family. Dus3 subfamily.</text>
</comment>
<sequence>MTVQEKRPLDEANVQGDECKKPNTQPYVKGMAAIKPEYLAPISSNVLQVVEYDDDEAESGGRETSDASGNNSNNNKGKKGKNGKKGRGQNHNRDLKQKGDAVRLCMVMIDPEDDDTKCAAGGAENCKYSHNIEEYLAAKSDDIEGTCPVYEALGYCPSGLKCRWLHSHYNKETKKLIKDLEKLEREKSKNHEVNIIDRESKVALQRKKFNFDISTPVINFLESRKQKDDGKQNKEEQEASTDGNEKQEERKDNEASYVEQPFKVAEKKKINLRGAKIVSPLTTVGNLPYRRLMKTLGADVTYSEMALAVPLSQGHRPEWALPKAHVTEYPGFGVQIASSKHWAAAKAAEALYKTTLHVSEINLNCGCPIDLLFKQGQGSALLDSPPRLIRIVKAMNASSGDIPVTIKIRTGVKENKNTAVHLVNRVLEETQVAAITLHGRSRQQRYTKEADWDYIEEVGKVVKTWNEKREDEDKEGRDTNPTWFVGNGDVYSHEDWYNGVNREGVDSVMVARGALIKPWIFEEVEAQQYLDKSSTERLAMLEKYAKYAVEHWGSDEYGVSNARRFMCEFLSFTHRYVPVGILERLPAKLNERPPKWIGRNDLETLLGSSDYKDWIKITEMFLGKAGDDFLFIPKHKSNSYEN</sequence>
<name>DUS3_LODEL</name>
<feature type="chain" id="PRO_0000330241" description="tRNA-dihydrouridine(47) synthase [NAD(P)(+)]">
    <location>
        <begin position="1"/>
        <end position="642"/>
    </location>
</feature>
<feature type="zinc finger region" description="C3H1-type 1">
    <location>
        <begin position="105"/>
        <end position="130"/>
    </location>
</feature>
<feature type="zinc finger region" description="C3H1-type 2">
    <location>
        <begin position="147"/>
        <end position="168"/>
    </location>
</feature>
<feature type="region of interest" description="Disordered" evidence="4">
    <location>
        <begin position="1"/>
        <end position="26"/>
    </location>
</feature>
<feature type="region of interest" description="Disordered" evidence="4">
    <location>
        <begin position="51"/>
        <end position="97"/>
    </location>
</feature>
<feature type="region of interest" description="Disordered" evidence="4">
    <location>
        <begin position="223"/>
        <end position="258"/>
    </location>
</feature>
<feature type="compositionally biased region" description="Basic and acidic residues" evidence="4">
    <location>
        <begin position="1"/>
        <end position="10"/>
    </location>
</feature>
<feature type="compositionally biased region" description="Basic residues" evidence="4">
    <location>
        <begin position="76"/>
        <end position="90"/>
    </location>
</feature>
<feature type="compositionally biased region" description="Basic and acidic residues" evidence="4">
    <location>
        <begin position="223"/>
        <end position="254"/>
    </location>
</feature>
<feature type="active site" description="Proton donor" evidence="2">
    <location>
        <position position="367"/>
    </location>
</feature>
<feature type="binding site" evidence="2">
    <location>
        <begin position="280"/>
        <end position="282"/>
    </location>
    <ligand>
        <name>FMN</name>
        <dbReference type="ChEBI" id="CHEBI:58210"/>
    </ligand>
</feature>
<feature type="binding site" evidence="2">
    <location>
        <position position="335"/>
    </location>
    <ligand>
        <name>FMN</name>
        <dbReference type="ChEBI" id="CHEBI:58210"/>
    </ligand>
</feature>
<feature type="binding site" evidence="2">
    <location>
        <position position="407"/>
    </location>
    <ligand>
        <name>FMN</name>
        <dbReference type="ChEBI" id="CHEBI:58210"/>
    </ligand>
</feature>
<feature type="binding site" evidence="2">
    <location>
        <position position="438"/>
    </location>
    <ligand>
        <name>FMN</name>
        <dbReference type="ChEBI" id="CHEBI:58210"/>
    </ligand>
</feature>
<feature type="binding site" evidence="2">
    <location>
        <begin position="487"/>
        <end position="489"/>
    </location>
    <ligand>
        <name>FMN</name>
        <dbReference type="ChEBI" id="CHEBI:58210"/>
    </ligand>
</feature>
<feature type="binding site" evidence="2">
    <location>
        <begin position="511"/>
        <end position="512"/>
    </location>
    <ligand>
        <name>FMN</name>
        <dbReference type="ChEBI" id="CHEBI:58210"/>
    </ligand>
</feature>
<protein>
    <recommendedName>
        <fullName>tRNA-dihydrouridine(47) synthase [NAD(P)(+)]</fullName>
        <ecNumber evidence="1">1.3.1.89</ecNumber>
    </recommendedName>
    <alternativeName>
        <fullName>mRNA-dihydrouridine synthase DUS3</fullName>
        <ecNumber evidence="3">1.3.1.-</ecNumber>
    </alternativeName>
    <alternativeName>
        <fullName>tRNA-dihydrouridine synthase 3</fullName>
    </alternativeName>
</protein>
<organism>
    <name type="scientific">Lodderomyces elongisporus (strain ATCC 11503 / CBS 2605 / JCM 1781 / NBRC 1676 / NRRL YB-4239)</name>
    <name type="common">Yeast</name>
    <name type="synonym">Saccharomyces elongisporus</name>
    <dbReference type="NCBI Taxonomy" id="379508"/>
    <lineage>
        <taxon>Eukaryota</taxon>
        <taxon>Fungi</taxon>
        <taxon>Dikarya</taxon>
        <taxon>Ascomycota</taxon>
        <taxon>Saccharomycotina</taxon>
        <taxon>Pichiomycetes</taxon>
        <taxon>Debaryomycetaceae</taxon>
        <taxon>Candida/Lodderomyces clade</taxon>
        <taxon>Lodderomyces</taxon>
    </lineage>
</organism>
<gene>
    <name type="primary">DUS3</name>
    <name type="ORF">LELG_00757</name>
</gene>